<reference key="1">
    <citation type="journal article" date="1985" name="Eur. J. Biochem.">
        <title>The complete primary structure of ribosomal proteins L1, L14, L15, L23, L24 and L29 from Bacillus stearothermophilus.</title>
        <authorList>
            <person name="Kimura M."/>
            <person name="Kimura J."/>
            <person name="Ashman K."/>
        </authorList>
    </citation>
    <scope>PROTEIN SEQUENCE</scope>
</reference>
<reference key="2">
    <citation type="journal article" date="1995" name="EMBO J.">
        <title>Protein-rRNA binding features and their structural and functional implications in ribosomes as determined by cross-linking studies.</title>
        <authorList>
            <person name="Urlaub H."/>
            <person name="Kruft V."/>
            <person name="Bischof O."/>
            <person name="Mueller E.-C."/>
            <person name="Wittmann-Liebold B."/>
        </authorList>
    </citation>
    <scope>PROTEIN SEQUENCE OF 24-35</scope>
    <scope>CROSS-LINKING TO RRNA</scope>
    <source>
        <strain>799</strain>
    </source>
</reference>
<reference key="3">
    <citation type="journal article" date="1996" name="Structure">
        <title>The crystal structure of ribosomal protein L14 reveals an important organizational component of the translational apparatus.</title>
        <authorList>
            <person name="Davies C."/>
            <person name="White S.W."/>
            <person name="Ramakrishnan V."/>
        </authorList>
    </citation>
    <scope>X-RAY CRYSTALLOGRAPHY (1.5 ANGSTROMS)</scope>
</reference>
<reference key="4">
    <citation type="journal article" date="1999" name="Nature">
        <title>Placement of protein and RNA structures into a 5 A-resolution map of the 50S ribosomal subunit.</title>
        <authorList>
            <person name="Ban N."/>
            <person name="Nissen P."/>
            <person name="Hansen J."/>
            <person name="Capel M."/>
            <person name="Moore P.B."/>
            <person name="Steitz T.A."/>
        </authorList>
    </citation>
    <scope>3D-STRUCTURE MODELING ONTO THE H.MARISMORTUI 50S RIBOSOME</scope>
</reference>
<sequence>MIQQESRLKVADNSGAREVLVIKVLGGSGRRYANIGDVVVATVKDATPGGVVKKGQVVKAVVVRTKRGVRRPDGSYIRFDENACVIIRDDKSPRGTRIFGPVARELRDKDFMKIISLAPEVI</sequence>
<name>RL14_GEOSE</name>
<comment type="function">
    <text evidence="1">Forms part of two intersubunit bridges in the 70S ribosome (By similarity). Binds to 23S rRNA.</text>
</comment>
<comment type="subunit">
    <text evidence="1">Forms a cluster with proteins L3 and L19. In the 70S ribosome, L14 and L19 interact and together make contacts with the 16S rRNA in bridges B5 and B8 (By similarity). Part of the 50S ribosomal subunit.</text>
</comment>
<comment type="similarity">
    <text evidence="2">Belongs to the universal ribosomal protein uL14 family.</text>
</comment>
<keyword id="KW-0002">3D-structure</keyword>
<keyword id="KW-0903">Direct protein sequencing</keyword>
<keyword id="KW-0687">Ribonucleoprotein</keyword>
<keyword id="KW-0689">Ribosomal protein</keyword>
<keyword id="KW-0694">RNA-binding</keyword>
<keyword id="KW-0699">rRNA-binding</keyword>
<feature type="chain" id="PRO_0000128529" description="Large ribosomal subunit protein uL14">
    <location>
        <begin position="1"/>
        <end position="122"/>
    </location>
</feature>
<feature type="strand" evidence="4">
    <location>
        <begin position="7"/>
        <end position="10"/>
    </location>
</feature>
<feature type="strand" evidence="4">
    <location>
        <begin position="12"/>
        <end position="24"/>
    </location>
</feature>
<feature type="strand" evidence="4">
    <location>
        <begin position="38"/>
        <end position="46"/>
    </location>
</feature>
<feature type="strand" evidence="4">
    <location>
        <begin position="50"/>
        <end position="52"/>
    </location>
</feature>
<feature type="strand" evidence="4">
    <location>
        <begin position="57"/>
        <end position="64"/>
    </location>
</feature>
<feature type="strand" evidence="4">
    <location>
        <begin position="83"/>
        <end position="87"/>
    </location>
</feature>
<feature type="strand" evidence="4">
    <location>
        <begin position="93"/>
        <end position="96"/>
    </location>
</feature>
<feature type="helix" evidence="4">
    <location>
        <begin position="105"/>
        <end position="108"/>
    </location>
</feature>
<feature type="helix" evidence="4">
    <location>
        <begin position="112"/>
        <end position="117"/>
    </location>
</feature>
<proteinExistence type="evidence at protein level"/>
<gene>
    <name evidence="2" type="primary">rplN</name>
</gene>
<organism>
    <name type="scientific">Geobacillus stearothermophilus</name>
    <name type="common">Bacillus stearothermophilus</name>
    <dbReference type="NCBI Taxonomy" id="1422"/>
    <lineage>
        <taxon>Bacteria</taxon>
        <taxon>Bacillati</taxon>
        <taxon>Bacillota</taxon>
        <taxon>Bacilli</taxon>
        <taxon>Bacillales</taxon>
        <taxon>Anoxybacillaceae</taxon>
        <taxon>Geobacillus</taxon>
    </lineage>
</organism>
<evidence type="ECO:0000250" key="1"/>
<evidence type="ECO:0000255" key="2">
    <source>
        <dbReference type="HAMAP-Rule" id="MF_01367"/>
    </source>
</evidence>
<evidence type="ECO:0000305" key="3"/>
<evidence type="ECO:0007829" key="4">
    <source>
        <dbReference type="PDB" id="1WHI"/>
    </source>
</evidence>
<dbReference type="PIR" id="A02789">
    <property type="entry name" value="R5BS14"/>
</dbReference>
<dbReference type="RefSeq" id="WP_011229630.1">
    <property type="nucleotide sequence ID" value="NZ_RCTK01000011.1"/>
</dbReference>
<dbReference type="PDB" id="1ML5">
    <property type="method" value="EM"/>
    <property type="resolution" value="14.00 A"/>
    <property type="chains" value="n=1-122"/>
</dbReference>
<dbReference type="PDB" id="1WHI">
    <property type="method" value="X-ray"/>
    <property type="resolution" value="1.50 A"/>
    <property type="chains" value="A=1-122"/>
</dbReference>
<dbReference type="PDB" id="4V4T">
    <property type="method" value="X-ray"/>
    <property type="resolution" value="6.46 A"/>
    <property type="chains" value="O=1-122"/>
</dbReference>
<dbReference type="PDBsum" id="1ML5"/>
<dbReference type="PDBsum" id="1WHI"/>
<dbReference type="PDBsum" id="4V4T"/>
<dbReference type="SMR" id="P04450"/>
<dbReference type="IntAct" id="P04450">
    <property type="interactions" value="1"/>
</dbReference>
<dbReference type="GeneID" id="89612890"/>
<dbReference type="OrthoDB" id="9806379at2"/>
<dbReference type="EvolutionaryTrace" id="P04450"/>
<dbReference type="GO" id="GO:0022625">
    <property type="term" value="C:cytosolic large ribosomal subunit"/>
    <property type="evidence" value="ECO:0007669"/>
    <property type="project" value="TreeGrafter"/>
</dbReference>
<dbReference type="GO" id="GO:0070180">
    <property type="term" value="F:large ribosomal subunit rRNA binding"/>
    <property type="evidence" value="ECO:0007669"/>
    <property type="project" value="TreeGrafter"/>
</dbReference>
<dbReference type="GO" id="GO:0003735">
    <property type="term" value="F:structural constituent of ribosome"/>
    <property type="evidence" value="ECO:0007669"/>
    <property type="project" value="InterPro"/>
</dbReference>
<dbReference type="GO" id="GO:0006412">
    <property type="term" value="P:translation"/>
    <property type="evidence" value="ECO:0007669"/>
    <property type="project" value="UniProtKB-UniRule"/>
</dbReference>
<dbReference type="CDD" id="cd00337">
    <property type="entry name" value="Ribosomal_uL14"/>
    <property type="match status" value="1"/>
</dbReference>
<dbReference type="FunFam" id="2.40.150.20:FF:000001">
    <property type="entry name" value="50S ribosomal protein L14"/>
    <property type="match status" value="1"/>
</dbReference>
<dbReference type="Gene3D" id="2.40.150.20">
    <property type="entry name" value="Ribosomal protein L14"/>
    <property type="match status" value="1"/>
</dbReference>
<dbReference type="HAMAP" id="MF_01367">
    <property type="entry name" value="Ribosomal_uL14"/>
    <property type="match status" value="1"/>
</dbReference>
<dbReference type="InterPro" id="IPR000218">
    <property type="entry name" value="Ribosomal_uL14"/>
</dbReference>
<dbReference type="InterPro" id="IPR005745">
    <property type="entry name" value="Ribosomal_uL14_bac-type"/>
</dbReference>
<dbReference type="InterPro" id="IPR019972">
    <property type="entry name" value="Ribosomal_uL14_CS"/>
</dbReference>
<dbReference type="InterPro" id="IPR036853">
    <property type="entry name" value="Ribosomal_uL14_sf"/>
</dbReference>
<dbReference type="NCBIfam" id="TIGR01067">
    <property type="entry name" value="rplN_bact"/>
    <property type="match status" value="1"/>
</dbReference>
<dbReference type="PANTHER" id="PTHR11761">
    <property type="entry name" value="50S/60S RIBOSOMAL PROTEIN L14/L23"/>
    <property type="match status" value="1"/>
</dbReference>
<dbReference type="PANTHER" id="PTHR11761:SF3">
    <property type="entry name" value="LARGE RIBOSOMAL SUBUNIT PROTEIN UL14M"/>
    <property type="match status" value="1"/>
</dbReference>
<dbReference type="Pfam" id="PF00238">
    <property type="entry name" value="Ribosomal_L14"/>
    <property type="match status" value="1"/>
</dbReference>
<dbReference type="SMART" id="SM01374">
    <property type="entry name" value="Ribosomal_L14"/>
    <property type="match status" value="1"/>
</dbReference>
<dbReference type="SUPFAM" id="SSF50193">
    <property type="entry name" value="Ribosomal protein L14"/>
    <property type="match status" value="1"/>
</dbReference>
<dbReference type="PROSITE" id="PS00049">
    <property type="entry name" value="RIBOSOMAL_L14"/>
    <property type="match status" value="1"/>
</dbReference>
<protein>
    <recommendedName>
        <fullName evidence="2">Large ribosomal subunit protein uL14</fullName>
    </recommendedName>
    <alternativeName>
        <fullName evidence="3">50S ribosomal protein L14</fullName>
    </alternativeName>
</protein>
<accession>P04450</accession>